<organism>
    <name type="scientific">Mycolicibacterium smegmatis (strain ATCC 700084 / mc(2)155)</name>
    <name type="common">Mycobacterium smegmatis</name>
    <dbReference type="NCBI Taxonomy" id="246196"/>
    <lineage>
        <taxon>Bacteria</taxon>
        <taxon>Bacillati</taxon>
        <taxon>Actinomycetota</taxon>
        <taxon>Actinomycetes</taxon>
        <taxon>Mycobacteriales</taxon>
        <taxon>Mycobacteriaceae</taxon>
        <taxon>Mycolicibacterium</taxon>
    </lineage>
</organism>
<accession>A0QSL4</accession>
<accession>I7FYC7</accession>
<feature type="chain" id="PRO_0000302243" description="Large ribosomal subunit protein bL36">
    <location>
        <begin position="1"/>
        <end position="37"/>
    </location>
</feature>
<feature type="strand" evidence="3">
    <location>
        <begin position="2"/>
        <end position="5"/>
    </location>
</feature>
<feature type="strand" evidence="4">
    <location>
        <begin position="10"/>
        <end position="13"/>
    </location>
</feature>
<feature type="strand" evidence="3">
    <location>
        <begin position="15"/>
        <end position="19"/>
    </location>
</feature>
<feature type="strand" evidence="3">
    <location>
        <begin position="22"/>
        <end position="26"/>
    </location>
</feature>
<feature type="strand" evidence="4">
    <location>
        <begin position="28"/>
        <end position="31"/>
    </location>
</feature>
<feature type="strand" evidence="3">
    <location>
        <begin position="34"/>
        <end position="36"/>
    </location>
</feature>
<name>RL36_MYCS2</name>
<reference key="1">
    <citation type="submission" date="2006-10" db="EMBL/GenBank/DDBJ databases">
        <authorList>
            <person name="Fleischmann R.D."/>
            <person name="Dodson R.J."/>
            <person name="Haft D.H."/>
            <person name="Merkel J.S."/>
            <person name="Nelson W.C."/>
            <person name="Fraser C.M."/>
        </authorList>
    </citation>
    <scope>NUCLEOTIDE SEQUENCE [LARGE SCALE GENOMIC DNA]</scope>
    <source>
        <strain>ATCC 700084 / mc(2)155</strain>
    </source>
</reference>
<reference key="2">
    <citation type="journal article" date="2007" name="Genome Biol.">
        <title>Interrupted coding sequences in Mycobacterium smegmatis: authentic mutations or sequencing errors?</title>
        <authorList>
            <person name="Deshayes C."/>
            <person name="Perrodou E."/>
            <person name="Gallien S."/>
            <person name="Euphrasie D."/>
            <person name="Schaeffer C."/>
            <person name="Van-Dorsselaer A."/>
            <person name="Poch O."/>
            <person name="Lecompte O."/>
            <person name="Reyrat J.-M."/>
        </authorList>
    </citation>
    <scope>NUCLEOTIDE SEQUENCE [LARGE SCALE GENOMIC DNA]</scope>
    <source>
        <strain>ATCC 700084 / mc(2)155</strain>
    </source>
</reference>
<reference key="3">
    <citation type="journal article" date="2009" name="Genome Res.">
        <title>Ortho-proteogenomics: multiple proteomes investigation through orthology and a new MS-based protocol.</title>
        <authorList>
            <person name="Gallien S."/>
            <person name="Perrodou E."/>
            <person name="Carapito C."/>
            <person name="Deshayes C."/>
            <person name="Reyrat J.-M."/>
            <person name="Van Dorsselaer A."/>
            <person name="Poch O."/>
            <person name="Schaeffer C."/>
            <person name="Lecompte O."/>
        </authorList>
    </citation>
    <scope>NUCLEOTIDE SEQUENCE [LARGE SCALE GENOMIC DNA]</scope>
    <source>
        <strain>ATCC 700084 / mc(2)155</strain>
    </source>
</reference>
<dbReference type="EMBL" id="CP000480">
    <property type="protein sequence ID" value="ABK75604.1"/>
    <property type="molecule type" value="Genomic_DNA"/>
</dbReference>
<dbReference type="EMBL" id="CP001663">
    <property type="protein sequence ID" value="AFP37957.1"/>
    <property type="molecule type" value="Genomic_DNA"/>
</dbReference>
<dbReference type="RefSeq" id="WP_003879483.1">
    <property type="nucleotide sequence ID" value="NZ_SIJM01000016.1"/>
</dbReference>
<dbReference type="RefSeq" id="YP_885902.1">
    <property type="nucleotide sequence ID" value="NC_008596.1"/>
</dbReference>
<dbReference type="PDB" id="5O60">
    <property type="method" value="EM"/>
    <property type="resolution" value="3.20 A"/>
    <property type="chains" value="f=1-37"/>
</dbReference>
<dbReference type="PDB" id="5O61">
    <property type="method" value="EM"/>
    <property type="resolution" value="3.31 A"/>
    <property type="chains" value="f=1-37"/>
</dbReference>
<dbReference type="PDB" id="5XYM">
    <property type="method" value="EM"/>
    <property type="resolution" value="3.08 A"/>
    <property type="chains" value="4=1-37"/>
</dbReference>
<dbReference type="PDB" id="5ZEB">
    <property type="method" value="EM"/>
    <property type="resolution" value="3.40 A"/>
    <property type="chains" value="7=1-37"/>
</dbReference>
<dbReference type="PDB" id="5ZEP">
    <property type="method" value="EM"/>
    <property type="resolution" value="3.40 A"/>
    <property type="chains" value="4=1-37"/>
</dbReference>
<dbReference type="PDB" id="5ZET">
    <property type="method" value="EM"/>
    <property type="resolution" value="3.20 A"/>
    <property type="chains" value="7=1-37"/>
</dbReference>
<dbReference type="PDB" id="6DZI">
    <property type="method" value="EM"/>
    <property type="resolution" value="3.46 A"/>
    <property type="chains" value="f=1-37"/>
</dbReference>
<dbReference type="PDB" id="6DZP">
    <property type="method" value="EM"/>
    <property type="resolution" value="3.42 A"/>
    <property type="chains" value="f=1-37"/>
</dbReference>
<dbReference type="PDB" id="7S0S">
    <property type="method" value="EM"/>
    <property type="resolution" value="3.05 A"/>
    <property type="chains" value="g=1-37"/>
</dbReference>
<dbReference type="PDB" id="7XAM">
    <property type="method" value="EM"/>
    <property type="resolution" value="2.80 A"/>
    <property type="chains" value="f=1-37"/>
</dbReference>
<dbReference type="PDB" id="7Y41">
    <property type="method" value="EM"/>
    <property type="resolution" value="4.10 A"/>
    <property type="chains" value="f=1-37"/>
</dbReference>
<dbReference type="PDB" id="8FR8">
    <property type="method" value="EM"/>
    <property type="resolution" value="2.76 A"/>
    <property type="chains" value="F=1-37"/>
</dbReference>
<dbReference type="PDB" id="8KAB">
    <property type="method" value="EM"/>
    <property type="resolution" value="3.30 A"/>
    <property type="chains" value="f=1-37"/>
</dbReference>
<dbReference type="PDB" id="8V9J">
    <property type="method" value="EM"/>
    <property type="resolution" value="3.10 A"/>
    <property type="chains" value="8=1-37"/>
</dbReference>
<dbReference type="PDB" id="8V9K">
    <property type="method" value="EM"/>
    <property type="resolution" value="3.10 A"/>
    <property type="chains" value="8=1-37"/>
</dbReference>
<dbReference type="PDB" id="8V9L">
    <property type="method" value="EM"/>
    <property type="resolution" value="3.00 A"/>
    <property type="chains" value="8=1-37"/>
</dbReference>
<dbReference type="PDB" id="8VIO">
    <property type="method" value="EM"/>
    <property type="resolution" value="3.26 A"/>
    <property type="chains" value="f=1-37"/>
</dbReference>
<dbReference type="PDB" id="8VK0">
    <property type="method" value="EM"/>
    <property type="resolution" value="3.14 A"/>
    <property type="chains" value="f=1-37"/>
</dbReference>
<dbReference type="PDB" id="8VK7">
    <property type="method" value="EM"/>
    <property type="resolution" value="3.09 A"/>
    <property type="chains" value="f=1-37"/>
</dbReference>
<dbReference type="PDB" id="8VKI">
    <property type="method" value="EM"/>
    <property type="resolution" value="2.96 A"/>
    <property type="chains" value="f=1-37"/>
</dbReference>
<dbReference type="PDB" id="8VKW">
    <property type="method" value="EM"/>
    <property type="resolution" value="3.44 A"/>
    <property type="chains" value="f=1-37"/>
</dbReference>
<dbReference type="PDB" id="8VR4">
    <property type="method" value="EM"/>
    <property type="resolution" value="2.80 A"/>
    <property type="chains" value="f=1-37"/>
</dbReference>
<dbReference type="PDB" id="8VR8">
    <property type="method" value="EM"/>
    <property type="resolution" value="3.25 A"/>
    <property type="chains" value="f=1-37"/>
</dbReference>
<dbReference type="PDB" id="8VRL">
    <property type="method" value="EM"/>
    <property type="resolution" value="3.33 A"/>
    <property type="chains" value="f=1-37"/>
</dbReference>
<dbReference type="PDB" id="8XZ3">
    <property type="method" value="EM"/>
    <property type="resolution" value="3.60 A"/>
    <property type="chains" value="f=1-37"/>
</dbReference>
<dbReference type="PDBsum" id="5O60"/>
<dbReference type="PDBsum" id="5O61"/>
<dbReference type="PDBsum" id="5XYM"/>
<dbReference type="PDBsum" id="5ZEB"/>
<dbReference type="PDBsum" id="5ZEP"/>
<dbReference type="PDBsum" id="5ZET"/>
<dbReference type="PDBsum" id="6DZI"/>
<dbReference type="PDBsum" id="6DZP"/>
<dbReference type="PDBsum" id="7S0S"/>
<dbReference type="PDBsum" id="7XAM"/>
<dbReference type="PDBsum" id="7Y41"/>
<dbReference type="PDBsum" id="8FR8"/>
<dbReference type="PDBsum" id="8KAB"/>
<dbReference type="PDBsum" id="8V9J"/>
<dbReference type="PDBsum" id="8V9K"/>
<dbReference type="PDBsum" id="8V9L"/>
<dbReference type="PDBsum" id="8VIO"/>
<dbReference type="PDBsum" id="8VK0"/>
<dbReference type="PDBsum" id="8VK7"/>
<dbReference type="PDBsum" id="8VKI"/>
<dbReference type="PDBsum" id="8VKW"/>
<dbReference type="PDBsum" id="8VR4"/>
<dbReference type="PDBsum" id="8VR8"/>
<dbReference type="PDBsum" id="8VRL"/>
<dbReference type="PDBsum" id="8XZ3"/>
<dbReference type="EMDB" id="EMD-24792"/>
<dbReference type="EMDB" id="EMD-29397"/>
<dbReference type="EMDB" id="EMD-33096"/>
<dbReference type="EMDB" id="EMD-33599"/>
<dbReference type="EMDB" id="EMD-37007"/>
<dbReference type="EMDB" id="EMD-3750"/>
<dbReference type="EMDB" id="EMD-3751"/>
<dbReference type="EMDB" id="EMD-38788"/>
<dbReference type="EMDB" id="EMD-43074"/>
<dbReference type="EMDB" id="EMD-43075"/>
<dbReference type="EMDB" id="EMD-43076"/>
<dbReference type="EMDB" id="EMD-43267"/>
<dbReference type="EMDB" id="EMD-43294"/>
<dbReference type="EMDB" id="EMD-43305"/>
<dbReference type="EMDB" id="EMD-43317"/>
<dbReference type="EMDB" id="EMD-43333"/>
<dbReference type="EMDB" id="EMD-43476"/>
<dbReference type="EMDB" id="EMD-43477"/>
<dbReference type="EMDB" id="EMD-43484"/>
<dbReference type="EMDB" id="EMD-6789"/>
<dbReference type="EMDB" id="EMD-6920"/>
<dbReference type="EMDB" id="EMD-6921"/>
<dbReference type="EMDB" id="EMD-6922"/>
<dbReference type="EMDB" id="EMD-8932"/>
<dbReference type="EMDB" id="EMD-8937"/>
<dbReference type="SMR" id="A0QSL4"/>
<dbReference type="IntAct" id="A0QSL4">
    <property type="interactions" value="2"/>
</dbReference>
<dbReference type="STRING" id="246196.MSMEG_1520"/>
<dbReference type="PaxDb" id="246196-MSMEI_1484"/>
<dbReference type="GeneID" id="98799388"/>
<dbReference type="KEGG" id="msb:LJ00_07595"/>
<dbReference type="KEGG" id="msg:MSMEI_1484"/>
<dbReference type="KEGG" id="msm:MSMEG_1520"/>
<dbReference type="PATRIC" id="fig|246196.19.peg.1505"/>
<dbReference type="eggNOG" id="COG0257">
    <property type="taxonomic scope" value="Bacteria"/>
</dbReference>
<dbReference type="OrthoDB" id="9802520at2"/>
<dbReference type="Proteomes" id="UP000000757">
    <property type="component" value="Chromosome"/>
</dbReference>
<dbReference type="Proteomes" id="UP000006158">
    <property type="component" value="Chromosome"/>
</dbReference>
<dbReference type="GO" id="GO:0005737">
    <property type="term" value="C:cytoplasm"/>
    <property type="evidence" value="ECO:0007669"/>
    <property type="project" value="UniProtKB-ARBA"/>
</dbReference>
<dbReference type="GO" id="GO:1990904">
    <property type="term" value="C:ribonucleoprotein complex"/>
    <property type="evidence" value="ECO:0007669"/>
    <property type="project" value="UniProtKB-KW"/>
</dbReference>
<dbReference type="GO" id="GO:0005840">
    <property type="term" value="C:ribosome"/>
    <property type="evidence" value="ECO:0007669"/>
    <property type="project" value="UniProtKB-KW"/>
</dbReference>
<dbReference type="GO" id="GO:0003735">
    <property type="term" value="F:structural constituent of ribosome"/>
    <property type="evidence" value="ECO:0007669"/>
    <property type="project" value="InterPro"/>
</dbReference>
<dbReference type="GO" id="GO:0006412">
    <property type="term" value="P:translation"/>
    <property type="evidence" value="ECO:0007669"/>
    <property type="project" value="UniProtKB-UniRule"/>
</dbReference>
<dbReference type="HAMAP" id="MF_00251">
    <property type="entry name" value="Ribosomal_bL36"/>
    <property type="match status" value="1"/>
</dbReference>
<dbReference type="InterPro" id="IPR000473">
    <property type="entry name" value="Ribosomal_bL36"/>
</dbReference>
<dbReference type="InterPro" id="IPR035977">
    <property type="entry name" value="Ribosomal_bL36_sp"/>
</dbReference>
<dbReference type="NCBIfam" id="TIGR01022">
    <property type="entry name" value="rpmJ_bact"/>
    <property type="match status" value="1"/>
</dbReference>
<dbReference type="PANTHER" id="PTHR42888">
    <property type="entry name" value="50S RIBOSOMAL PROTEIN L36, CHLOROPLASTIC"/>
    <property type="match status" value="1"/>
</dbReference>
<dbReference type="PANTHER" id="PTHR42888:SF1">
    <property type="entry name" value="LARGE RIBOSOMAL SUBUNIT PROTEIN BL36C"/>
    <property type="match status" value="1"/>
</dbReference>
<dbReference type="Pfam" id="PF00444">
    <property type="entry name" value="Ribosomal_L36"/>
    <property type="match status" value="1"/>
</dbReference>
<dbReference type="SUPFAM" id="SSF57840">
    <property type="entry name" value="Ribosomal protein L36"/>
    <property type="match status" value="1"/>
</dbReference>
<dbReference type="PROSITE" id="PS00828">
    <property type="entry name" value="RIBOSOMAL_L36"/>
    <property type="match status" value="1"/>
</dbReference>
<proteinExistence type="evidence at protein level"/>
<gene>
    <name evidence="1" type="primary">rpmJ</name>
    <name type="ordered locus">MSMEG_1520</name>
    <name type="ordered locus">MSMEI_1484</name>
</gene>
<protein>
    <recommendedName>
        <fullName evidence="1">Large ribosomal subunit protein bL36</fullName>
    </recommendedName>
    <alternativeName>
        <fullName evidence="2">50S ribosomal protein L36</fullName>
    </alternativeName>
</protein>
<comment type="similarity">
    <text evidence="1">Belongs to the bacterial ribosomal protein bL36 family.</text>
</comment>
<keyword id="KW-0002">3D-structure</keyword>
<keyword id="KW-1185">Reference proteome</keyword>
<keyword id="KW-0687">Ribonucleoprotein</keyword>
<keyword id="KW-0689">Ribosomal protein</keyword>
<evidence type="ECO:0000255" key="1">
    <source>
        <dbReference type="HAMAP-Rule" id="MF_00251"/>
    </source>
</evidence>
<evidence type="ECO:0000305" key="2"/>
<evidence type="ECO:0007829" key="3">
    <source>
        <dbReference type="PDB" id="5O60"/>
    </source>
</evidence>
<evidence type="ECO:0007829" key="4">
    <source>
        <dbReference type="PDB" id="5XYM"/>
    </source>
</evidence>
<sequence>MKVNPSVKPICDKCRVIRRHGRVMVICSDPRHKQRQG</sequence>